<evidence type="ECO:0000255" key="1">
    <source>
        <dbReference type="HAMAP-Rule" id="MF_01518"/>
    </source>
</evidence>
<name>ADEC_DESHY</name>
<gene>
    <name evidence="1" type="primary">ade</name>
    <name type="ordered locus">DSY3665</name>
</gene>
<feature type="chain" id="PRO_0000296721" description="Adenine deaminase">
    <location>
        <begin position="1"/>
        <end position="569"/>
    </location>
</feature>
<comment type="catalytic activity">
    <reaction evidence="1">
        <text>adenine + H2O + H(+) = hypoxanthine + NH4(+)</text>
        <dbReference type="Rhea" id="RHEA:23688"/>
        <dbReference type="ChEBI" id="CHEBI:15377"/>
        <dbReference type="ChEBI" id="CHEBI:15378"/>
        <dbReference type="ChEBI" id="CHEBI:16708"/>
        <dbReference type="ChEBI" id="CHEBI:17368"/>
        <dbReference type="ChEBI" id="CHEBI:28938"/>
        <dbReference type="EC" id="3.5.4.2"/>
    </reaction>
</comment>
<comment type="cofactor">
    <cofactor evidence="1">
        <name>Mn(2+)</name>
        <dbReference type="ChEBI" id="CHEBI:29035"/>
    </cofactor>
</comment>
<comment type="similarity">
    <text evidence="1">Belongs to the metallo-dependent hydrolases superfamily. Adenine deaminase family.</text>
</comment>
<accession>Q24R88</accession>
<protein>
    <recommendedName>
        <fullName evidence="1">Adenine deaminase</fullName>
        <shortName evidence="1">Adenase</shortName>
        <shortName evidence="1">Adenine aminase</shortName>
        <ecNumber evidence="1">3.5.4.2</ecNumber>
    </recommendedName>
</protein>
<dbReference type="EC" id="3.5.4.2" evidence="1"/>
<dbReference type="EMBL" id="AP008230">
    <property type="protein sequence ID" value="BAE85454.1"/>
    <property type="molecule type" value="Genomic_DNA"/>
</dbReference>
<dbReference type="RefSeq" id="WP_011461279.1">
    <property type="nucleotide sequence ID" value="NC_007907.1"/>
</dbReference>
<dbReference type="SMR" id="Q24R88"/>
<dbReference type="STRING" id="138119.DSY3665"/>
<dbReference type="KEGG" id="dsy:DSY3665"/>
<dbReference type="eggNOG" id="COG1001">
    <property type="taxonomic scope" value="Bacteria"/>
</dbReference>
<dbReference type="HOGENOM" id="CLU_027935_0_0_9"/>
<dbReference type="Proteomes" id="UP000001946">
    <property type="component" value="Chromosome"/>
</dbReference>
<dbReference type="GO" id="GO:0000034">
    <property type="term" value="F:adenine deaminase activity"/>
    <property type="evidence" value="ECO:0007669"/>
    <property type="project" value="UniProtKB-UniRule"/>
</dbReference>
<dbReference type="GO" id="GO:0006146">
    <property type="term" value="P:adenine catabolic process"/>
    <property type="evidence" value="ECO:0007669"/>
    <property type="project" value="InterPro"/>
</dbReference>
<dbReference type="CDD" id="cd01295">
    <property type="entry name" value="AdeC"/>
    <property type="match status" value="1"/>
</dbReference>
<dbReference type="Gene3D" id="3.20.20.140">
    <property type="entry name" value="Metal-dependent hydrolases"/>
    <property type="match status" value="1"/>
</dbReference>
<dbReference type="Gene3D" id="2.30.40.10">
    <property type="entry name" value="Urease, subunit C, domain 1"/>
    <property type="match status" value="1"/>
</dbReference>
<dbReference type="HAMAP" id="MF_01518">
    <property type="entry name" value="Adenine_deamin"/>
    <property type="match status" value="1"/>
</dbReference>
<dbReference type="InterPro" id="IPR006679">
    <property type="entry name" value="Adenine_deam"/>
</dbReference>
<dbReference type="InterPro" id="IPR026912">
    <property type="entry name" value="Adenine_deam_C"/>
</dbReference>
<dbReference type="InterPro" id="IPR006680">
    <property type="entry name" value="Amidohydro-rel"/>
</dbReference>
<dbReference type="InterPro" id="IPR011059">
    <property type="entry name" value="Metal-dep_hydrolase_composite"/>
</dbReference>
<dbReference type="InterPro" id="IPR032466">
    <property type="entry name" value="Metal_Hydrolase"/>
</dbReference>
<dbReference type="NCBIfam" id="TIGR01178">
    <property type="entry name" value="ade"/>
    <property type="match status" value="1"/>
</dbReference>
<dbReference type="PANTHER" id="PTHR11113:SF2">
    <property type="entry name" value="ADENINE DEAMINASE"/>
    <property type="match status" value="1"/>
</dbReference>
<dbReference type="PANTHER" id="PTHR11113">
    <property type="entry name" value="N-ACETYLGLUCOSAMINE-6-PHOSPHATE DEACETYLASE"/>
    <property type="match status" value="1"/>
</dbReference>
<dbReference type="Pfam" id="PF13382">
    <property type="entry name" value="Adenine_deam_C"/>
    <property type="match status" value="1"/>
</dbReference>
<dbReference type="Pfam" id="PF01979">
    <property type="entry name" value="Amidohydro_1"/>
    <property type="match status" value="1"/>
</dbReference>
<dbReference type="SUPFAM" id="SSF51338">
    <property type="entry name" value="Composite domain of metallo-dependent hydrolases"/>
    <property type="match status" value="1"/>
</dbReference>
<dbReference type="SUPFAM" id="SSF51556">
    <property type="entry name" value="Metallo-dependent hydrolases"/>
    <property type="match status" value="1"/>
</dbReference>
<keyword id="KW-0378">Hydrolase</keyword>
<keyword id="KW-0464">Manganese</keyword>
<keyword id="KW-1185">Reference proteome</keyword>
<reference key="1">
    <citation type="journal article" date="2006" name="J. Bacteriol.">
        <title>Complete genome sequence of the dehalorespiring bacterium Desulfitobacterium hafniense Y51 and comparison with Dehalococcoides ethenogenes 195.</title>
        <authorList>
            <person name="Nonaka H."/>
            <person name="Keresztes G."/>
            <person name="Shinoda Y."/>
            <person name="Ikenaga Y."/>
            <person name="Abe M."/>
            <person name="Naito K."/>
            <person name="Inatomi K."/>
            <person name="Furukawa K."/>
            <person name="Inui M."/>
            <person name="Yukawa H."/>
        </authorList>
    </citation>
    <scope>NUCLEOTIDE SEQUENCE [LARGE SCALE GENOMIC DNA]</scope>
    <source>
        <strain>Y51</strain>
    </source>
</reference>
<sequence>MNDKDLKKLTAKSLGREKAELVLKNAQVINVFSEEILVRDVAVGDGMIVGVGQYQGREEVDLSGKYLCPGFIDAHLHLESTLVAPPELIHSALQWGTTTFIIDPHEVVNVAGEEGLDYMLEQTEGLAANVFVMLPSCVPAVPFEENGGVFTAEKMEPYLANPRVLGLGEVMDYVSVIGAEEEMVKKLRLFRERIKDGHAPYLQDKQLAAYALAGIKTDHECIDYAYALEEIRNGMQVLIREGSGARNLAAIVRGIRENNLDTGNFSFCTDDKHINDIQREGHISYNIKKSIALGLPPLKAIKMATLNTARCYNLTELGAVAPGYQADFVILDSLEEVAVHAVYHKGKKVEREKKIDIKPCSEQLRRTVHLPALSAEDLKLAVPDSPSSLIQMSEGQITTKHVRDVLPARDGCFVPNAQYNKVVVVERHKGTGHFAVAPVLGFNLGQGAIATSVSHDSHNVVAIGDNDESILLALQELQRVQGGYTMIREQRVLATLPLPIMGLISDAGHQAVESMLNTMVGYAHEMGVPASIHPFIALSFIALPVIPEIRITTRGLYDAVEQKFIRYIP</sequence>
<organism>
    <name type="scientific">Desulfitobacterium hafniense (strain Y51)</name>
    <dbReference type="NCBI Taxonomy" id="138119"/>
    <lineage>
        <taxon>Bacteria</taxon>
        <taxon>Bacillati</taxon>
        <taxon>Bacillota</taxon>
        <taxon>Clostridia</taxon>
        <taxon>Eubacteriales</taxon>
        <taxon>Desulfitobacteriaceae</taxon>
        <taxon>Desulfitobacterium</taxon>
    </lineage>
</organism>
<proteinExistence type="inferred from homology"/>